<feature type="chain" id="PRO_1000100265" description="Dihydroorotate dehydrogenase (quinone)">
    <location>
        <begin position="1"/>
        <end position="349"/>
    </location>
</feature>
<feature type="region of interest" description="Disordered" evidence="2">
    <location>
        <begin position="244"/>
        <end position="265"/>
    </location>
</feature>
<feature type="compositionally biased region" description="Basic and acidic residues" evidence="2">
    <location>
        <begin position="245"/>
        <end position="255"/>
    </location>
</feature>
<feature type="active site" description="Nucleophile" evidence="1">
    <location>
        <position position="179"/>
    </location>
</feature>
<feature type="binding site" evidence="1">
    <location>
        <begin position="65"/>
        <end position="69"/>
    </location>
    <ligand>
        <name>FMN</name>
        <dbReference type="ChEBI" id="CHEBI:58210"/>
    </ligand>
</feature>
<feature type="binding site" evidence="1">
    <location>
        <position position="69"/>
    </location>
    <ligand>
        <name>substrate</name>
    </ligand>
</feature>
<feature type="binding site" evidence="1">
    <location>
        <position position="89"/>
    </location>
    <ligand>
        <name>FMN</name>
        <dbReference type="ChEBI" id="CHEBI:58210"/>
    </ligand>
</feature>
<feature type="binding site" evidence="1">
    <location>
        <begin position="114"/>
        <end position="118"/>
    </location>
    <ligand>
        <name>substrate</name>
    </ligand>
</feature>
<feature type="binding site" evidence="1">
    <location>
        <position position="143"/>
    </location>
    <ligand>
        <name>FMN</name>
        <dbReference type="ChEBI" id="CHEBI:58210"/>
    </ligand>
</feature>
<feature type="binding site" evidence="1">
    <location>
        <position position="176"/>
    </location>
    <ligand>
        <name>FMN</name>
        <dbReference type="ChEBI" id="CHEBI:58210"/>
    </ligand>
</feature>
<feature type="binding site" evidence="1">
    <location>
        <position position="176"/>
    </location>
    <ligand>
        <name>substrate</name>
    </ligand>
</feature>
<feature type="binding site" evidence="1">
    <location>
        <position position="181"/>
    </location>
    <ligand>
        <name>substrate</name>
    </ligand>
</feature>
<feature type="binding site" evidence="1">
    <location>
        <position position="212"/>
    </location>
    <ligand>
        <name>FMN</name>
        <dbReference type="ChEBI" id="CHEBI:58210"/>
    </ligand>
</feature>
<feature type="binding site" evidence="1">
    <location>
        <position position="240"/>
    </location>
    <ligand>
        <name>FMN</name>
        <dbReference type="ChEBI" id="CHEBI:58210"/>
    </ligand>
</feature>
<feature type="binding site" evidence="1">
    <location>
        <begin position="241"/>
        <end position="242"/>
    </location>
    <ligand>
        <name>substrate</name>
    </ligand>
</feature>
<feature type="binding site" evidence="1">
    <location>
        <position position="263"/>
    </location>
    <ligand>
        <name>FMN</name>
        <dbReference type="ChEBI" id="CHEBI:58210"/>
    </ligand>
</feature>
<feature type="binding site" evidence="1">
    <location>
        <position position="290"/>
    </location>
    <ligand>
        <name>FMN</name>
        <dbReference type="ChEBI" id="CHEBI:58210"/>
    </ligand>
</feature>
<feature type="binding site" evidence="1">
    <location>
        <begin position="311"/>
        <end position="312"/>
    </location>
    <ligand>
        <name>FMN</name>
        <dbReference type="ChEBI" id="CHEBI:58210"/>
    </ligand>
</feature>
<gene>
    <name evidence="1" type="primary">pyrD</name>
    <name type="ordered locus">OE_4508R</name>
</gene>
<proteinExistence type="inferred from homology"/>
<evidence type="ECO:0000255" key="1">
    <source>
        <dbReference type="HAMAP-Rule" id="MF_00225"/>
    </source>
</evidence>
<evidence type="ECO:0000256" key="2">
    <source>
        <dbReference type="SAM" id="MobiDB-lite"/>
    </source>
</evidence>
<reference key="1">
    <citation type="journal article" date="2008" name="Genomics">
        <title>Evolution in the laboratory: the genome of Halobacterium salinarum strain R1 compared to that of strain NRC-1.</title>
        <authorList>
            <person name="Pfeiffer F."/>
            <person name="Schuster S.C."/>
            <person name="Broicher A."/>
            <person name="Falb M."/>
            <person name="Palm P."/>
            <person name="Rodewald K."/>
            <person name="Ruepp A."/>
            <person name="Soppa J."/>
            <person name="Tittor J."/>
            <person name="Oesterhelt D."/>
        </authorList>
    </citation>
    <scope>NUCLEOTIDE SEQUENCE [LARGE SCALE GENOMIC DNA]</scope>
    <source>
        <strain>ATCC 29341 / DSM 671 / R1</strain>
    </source>
</reference>
<dbReference type="EC" id="1.3.5.2" evidence="1"/>
<dbReference type="EMBL" id="AM774415">
    <property type="protein sequence ID" value="CAP14877.1"/>
    <property type="molecule type" value="Genomic_DNA"/>
</dbReference>
<dbReference type="RefSeq" id="WP_010903871.1">
    <property type="nucleotide sequence ID" value="NC_010364.1"/>
</dbReference>
<dbReference type="SMR" id="B0R808"/>
<dbReference type="EnsemblBacteria" id="CAP14877">
    <property type="protein sequence ID" value="CAP14877"/>
    <property type="gene ID" value="OE_4508R"/>
</dbReference>
<dbReference type="KEGG" id="hsl:OE_4508R"/>
<dbReference type="HOGENOM" id="CLU_013640_2_0_2"/>
<dbReference type="PhylomeDB" id="B0R808"/>
<dbReference type="UniPathway" id="UPA00070">
    <property type="reaction ID" value="UER00946"/>
</dbReference>
<dbReference type="Proteomes" id="UP000001321">
    <property type="component" value="Chromosome"/>
</dbReference>
<dbReference type="GO" id="GO:0005737">
    <property type="term" value="C:cytoplasm"/>
    <property type="evidence" value="ECO:0007669"/>
    <property type="project" value="InterPro"/>
</dbReference>
<dbReference type="GO" id="GO:0005886">
    <property type="term" value="C:plasma membrane"/>
    <property type="evidence" value="ECO:0007669"/>
    <property type="project" value="UniProtKB-SubCell"/>
</dbReference>
<dbReference type="GO" id="GO:0106430">
    <property type="term" value="F:dihydroorotate dehydrogenase (quinone) activity"/>
    <property type="evidence" value="ECO:0007669"/>
    <property type="project" value="UniProtKB-EC"/>
</dbReference>
<dbReference type="GO" id="GO:0006207">
    <property type="term" value="P:'de novo' pyrimidine nucleobase biosynthetic process"/>
    <property type="evidence" value="ECO:0007669"/>
    <property type="project" value="InterPro"/>
</dbReference>
<dbReference type="GO" id="GO:0044205">
    <property type="term" value="P:'de novo' UMP biosynthetic process"/>
    <property type="evidence" value="ECO:0007669"/>
    <property type="project" value="UniProtKB-UniRule"/>
</dbReference>
<dbReference type="CDD" id="cd04738">
    <property type="entry name" value="DHOD_2_like"/>
    <property type="match status" value="1"/>
</dbReference>
<dbReference type="FunFam" id="3.20.20.70:FF:000561">
    <property type="entry name" value="Dihydroorotate dehydrogenase (quinone)"/>
    <property type="match status" value="1"/>
</dbReference>
<dbReference type="Gene3D" id="3.20.20.70">
    <property type="entry name" value="Aldolase class I"/>
    <property type="match status" value="1"/>
</dbReference>
<dbReference type="HAMAP" id="MF_00225">
    <property type="entry name" value="DHO_dh_type2"/>
    <property type="match status" value="1"/>
</dbReference>
<dbReference type="InterPro" id="IPR013785">
    <property type="entry name" value="Aldolase_TIM"/>
</dbReference>
<dbReference type="InterPro" id="IPR050074">
    <property type="entry name" value="DHO_dehydrogenase"/>
</dbReference>
<dbReference type="InterPro" id="IPR012135">
    <property type="entry name" value="Dihydroorotate_DH_1_2"/>
</dbReference>
<dbReference type="InterPro" id="IPR005719">
    <property type="entry name" value="Dihydroorotate_DH_2"/>
</dbReference>
<dbReference type="InterPro" id="IPR005720">
    <property type="entry name" value="Dihydroorotate_DH_cat"/>
</dbReference>
<dbReference type="InterPro" id="IPR001295">
    <property type="entry name" value="Dihydroorotate_DH_CS"/>
</dbReference>
<dbReference type="NCBIfam" id="NF003645">
    <property type="entry name" value="PRK05286.1-2"/>
    <property type="match status" value="1"/>
</dbReference>
<dbReference type="NCBIfam" id="NF003652">
    <property type="entry name" value="PRK05286.2-5"/>
    <property type="match status" value="1"/>
</dbReference>
<dbReference type="NCBIfam" id="TIGR01036">
    <property type="entry name" value="pyrD_sub2"/>
    <property type="match status" value="1"/>
</dbReference>
<dbReference type="PANTHER" id="PTHR48109:SF4">
    <property type="entry name" value="DIHYDROOROTATE DEHYDROGENASE (QUINONE), MITOCHONDRIAL"/>
    <property type="match status" value="1"/>
</dbReference>
<dbReference type="PANTHER" id="PTHR48109">
    <property type="entry name" value="DIHYDROOROTATE DEHYDROGENASE (QUINONE), MITOCHONDRIAL-RELATED"/>
    <property type="match status" value="1"/>
</dbReference>
<dbReference type="Pfam" id="PF01180">
    <property type="entry name" value="DHO_dh"/>
    <property type="match status" value="1"/>
</dbReference>
<dbReference type="PIRSF" id="PIRSF000164">
    <property type="entry name" value="DHO_oxidase"/>
    <property type="match status" value="1"/>
</dbReference>
<dbReference type="SUPFAM" id="SSF51395">
    <property type="entry name" value="FMN-linked oxidoreductases"/>
    <property type="match status" value="1"/>
</dbReference>
<dbReference type="PROSITE" id="PS00911">
    <property type="entry name" value="DHODEHASE_1"/>
    <property type="match status" value="1"/>
</dbReference>
<dbReference type="PROSITE" id="PS00912">
    <property type="entry name" value="DHODEHASE_2"/>
    <property type="match status" value="1"/>
</dbReference>
<name>PYRD_HALS3</name>
<comment type="function">
    <text evidence="1">Catalyzes the conversion of dihydroorotate to orotate with quinone as electron acceptor.</text>
</comment>
<comment type="catalytic activity">
    <reaction evidence="1">
        <text>(S)-dihydroorotate + a quinone = orotate + a quinol</text>
        <dbReference type="Rhea" id="RHEA:30187"/>
        <dbReference type="ChEBI" id="CHEBI:24646"/>
        <dbReference type="ChEBI" id="CHEBI:30839"/>
        <dbReference type="ChEBI" id="CHEBI:30864"/>
        <dbReference type="ChEBI" id="CHEBI:132124"/>
        <dbReference type="EC" id="1.3.5.2"/>
    </reaction>
</comment>
<comment type="cofactor">
    <cofactor evidence="1">
        <name>FMN</name>
        <dbReference type="ChEBI" id="CHEBI:58210"/>
    </cofactor>
    <text evidence="1">Binds 1 FMN per subunit.</text>
</comment>
<comment type="pathway">
    <text evidence="1">Pyrimidine metabolism; UMP biosynthesis via de novo pathway; orotate from (S)-dihydroorotate (quinone route): step 1/1.</text>
</comment>
<comment type="subunit">
    <text evidence="1">Monomer.</text>
</comment>
<comment type="subcellular location">
    <subcellularLocation>
        <location evidence="1">Cell membrane</location>
        <topology evidence="1">Peripheral membrane protein</topology>
    </subcellularLocation>
</comment>
<comment type="similarity">
    <text evidence="1">Belongs to the dihydroorotate dehydrogenase family. Type 2 subfamily.</text>
</comment>
<protein>
    <recommendedName>
        <fullName evidence="1">Dihydroorotate dehydrogenase (quinone)</fullName>
        <ecNumber evidence="1">1.3.5.2</ecNumber>
    </recommendedName>
    <alternativeName>
        <fullName evidence="1">DHOdehase</fullName>
        <shortName evidence="1">DHOD</shortName>
        <shortName evidence="1">DHODase</shortName>
    </alternativeName>
    <alternativeName>
        <fullName evidence="1">Dihydroorotate oxidase</fullName>
    </alternativeName>
</protein>
<sequence length="349" mass="36942">MYGLLKSALFGLPPETTHEITTSALRVAQRVGAHRAYAKQFTVTDPRLSVDAFGQTFPNPVGMAAGFDKNAEIPRALAGLGFGHIEVGAVTAERQPGNDRPRLFRLPDDNALVNRMGFNNEGADTVGARLDAEPLPDVPVGVNIGKSKTTPLADAPDDYTYTFSRVGDAVDYVVVNVSSPNTPGLRELQGRDQLAAILEALQDAGASPLLVKLSPDLHQDAVADAVELANDLGLDGIVATNTTTERPESLSHPHAGEQGGLSGAPIRERATEQVRFVAERTDQPVVGVGGVATAEDAYEKIRAGASVVQLYTALVYEGPWVAKRINEGLVSLLERDGFDSVEDAVGADL</sequence>
<keyword id="KW-1003">Cell membrane</keyword>
<keyword id="KW-0285">Flavoprotein</keyword>
<keyword id="KW-0288">FMN</keyword>
<keyword id="KW-0472">Membrane</keyword>
<keyword id="KW-0560">Oxidoreductase</keyword>
<keyword id="KW-0665">Pyrimidine biosynthesis</keyword>
<organism>
    <name type="scientific">Halobacterium salinarum (strain ATCC 29341 / DSM 671 / R1)</name>
    <dbReference type="NCBI Taxonomy" id="478009"/>
    <lineage>
        <taxon>Archaea</taxon>
        <taxon>Methanobacteriati</taxon>
        <taxon>Methanobacteriota</taxon>
        <taxon>Stenosarchaea group</taxon>
        <taxon>Halobacteria</taxon>
        <taxon>Halobacteriales</taxon>
        <taxon>Halobacteriaceae</taxon>
        <taxon>Halobacterium</taxon>
        <taxon>Halobacterium salinarum NRC-34001</taxon>
    </lineage>
</organism>
<accession>B0R808</accession>